<dbReference type="EMBL" id="AY660566">
    <property type="protein sequence ID" value="AAT80748.1"/>
    <property type="molecule type" value="Genomic_DNA"/>
</dbReference>
<dbReference type="RefSeq" id="YP_209552.1">
    <property type="nucleotide sequence ID" value="NC_006861.1"/>
</dbReference>
<dbReference type="SMR" id="Q5SCY5"/>
<dbReference type="GeneID" id="3283778"/>
<dbReference type="GO" id="GO:0009535">
    <property type="term" value="C:chloroplast thylakoid membrane"/>
    <property type="evidence" value="ECO:0007669"/>
    <property type="project" value="UniProtKB-SubCell"/>
</dbReference>
<dbReference type="GO" id="GO:0009512">
    <property type="term" value="C:cytochrome b6f complex"/>
    <property type="evidence" value="ECO:0007669"/>
    <property type="project" value="InterPro"/>
</dbReference>
<dbReference type="GO" id="GO:0045158">
    <property type="term" value="F:electron transporter, transferring electrons within cytochrome b6/f complex of photosystem II activity"/>
    <property type="evidence" value="ECO:0007669"/>
    <property type="project" value="InterPro"/>
</dbReference>
<dbReference type="GO" id="GO:0017004">
    <property type="term" value="P:cytochrome complex assembly"/>
    <property type="evidence" value="ECO:0007669"/>
    <property type="project" value="UniProtKB-UniRule"/>
</dbReference>
<dbReference type="GO" id="GO:0015979">
    <property type="term" value="P:photosynthesis"/>
    <property type="evidence" value="ECO:0007669"/>
    <property type="project" value="UniProtKB-KW"/>
</dbReference>
<dbReference type="HAMAP" id="MF_00395">
    <property type="entry name" value="Cytb6_f_PetN"/>
    <property type="match status" value="1"/>
</dbReference>
<dbReference type="InterPro" id="IPR036143">
    <property type="entry name" value="Cytochr_b6-f_cplx_su8_sf"/>
</dbReference>
<dbReference type="InterPro" id="IPR005497">
    <property type="entry name" value="Cytochrome_b6-f_cplx_su8"/>
</dbReference>
<dbReference type="Pfam" id="PF03742">
    <property type="entry name" value="PetN"/>
    <property type="match status" value="1"/>
</dbReference>
<dbReference type="SUPFAM" id="SSF103451">
    <property type="entry name" value="PetN subunit of the cytochrome b6f complex"/>
    <property type="match status" value="1"/>
</dbReference>
<comment type="function">
    <text evidence="1">Component of the cytochrome b6-f complex, which mediates electron transfer between photosystem II (PSII) and photosystem I (PSI), cyclic electron flow around PSI, and state transitions.</text>
</comment>
<comment type="subunit">
    <text evidence="1">The 4 large subunits of the cytochrome b6-f complex are cytochrome b6, subunit IV (17 kDa polypeptide, PetD), cytochrome f and the Rieske protein, while the 4 small subunits are PetG, PetL, PetM and PetN. The complex functions as a dimer.</text>
</comment>
<comment type="subcellular location">
    <subcellularLocation>
        <location evidence="1">Plastid</location>
        <location evidence="1">Chloroplast thylakoid membrane</location>
        <topology evidence="1">Single-pass membrane protein</topology>
    </subcellularLocation>
</comment>
<comment type="similarity">
    <text evidence="1">Belongs to the PetN family.</text>
</comment>
<gene>
    <name evidence="1" type="primary">petN</name>
</gene>
<proteinExistence type="inferred from homology"/>
<feature type="chain" id="PRO_0000217110" description="Cytochrome b6-f complex subunit 8">
    <location>
        <begin position="1"/>
        <end position="29"/>
    </location>
</feature>
<feature type="transmembrane region" description="Helical" evidence="1">
    <location>
        <begin position="3"/>
        <end position="23"/>
    </location>
</feature>
<accession>Q5SCY5</accession>
<protein>
    <recommendedName>
        <fullName evidence="1">Cytochrome b6-f complex subunit 8</fullName>
    </recommendedName>
    <alternativeName>
        <fullName evidence="1">Cytochrome b6-f complex subunit PetN</fullName>
    </alternativeName>
    <alternativeName>
        <fullName evidence="1">Cytochrome b6-f complex subunit VIII</fullName>
    </alternativeName>
</protein>
<sequence>MDIVNIAWAALMVVSTFSLTLVVWGRSGL</sequence>
<geneLocation type="chloroplast"/>
<organism>
    <name type="scientific">Huperzia lucidula</name>
    <name type="common">Shining clubmoss</name>
    <name type="synonym">Lycopodium lucidulum</name>
    <dbReference type="NCBI Taxonomy" id="37429"/>
    <lineage>
        <taxon>Eukaryota</taxon>
        <taxon>Viridiplantae</taxon>
        <taxon>Streptophyta</taxon>
        <taxon>Embryophyta</taxon>
        <taxon>Tracheophyta</taxon>
        <taxon>Lycopodiopsida</taxon>
        <taxon>Lycopodiales</taxon>
        <taxon>Lycopodiaceae</taxon>
        <taxon>Huperzioideae</taxon>
        <taxon>Huperzia</taxon>
    </lineage>
</organism>
<evidence type="ECO:0000255" key="1">
    <source>
        <dbReference type="HAMAP-Rule" id="MF_00395"/>
    </source>
</evidence>
<keyword id="KW-0150">Chloroplast</keyword>
<keyword id="KW-0249">Electron transport</keyword>
<keyword id="KW-0472">Membrane</keyword>
<keyword id="KW-0602">Photosynthesis</keyword>
<keyword id="KW-0934">Plastid</keyword>
<keyword id="KW-0793">Thylakoid</keyword>
<keyword id="KW-0812">Transmembrane</keyword>
<keyword id="KW-1133">Transmembrane helix</keyword>
<keyword id="KW-0813">Transport</keyword>
<name>PETN_HUPLU</name>
<reference key="1">
    <citation type="journal article" date="2005" name="Gene">
        <title>The first complete chloroplast genome sequence of a lycophyte, Huperzia lucidula (Lycopodiaceae).</title>
        <authorList>
            <person name="Wolf P.G."/>
            <person name="Karol K.G."/>
            <person name="Mandoli D.F."/>
            <person name="Kuehl J.V."/>
            <person name="Arumuganathan K."/>
            <person name="Ellis M.W."/>
            <person name="Mishler B.D."/>
            <person name="Kelch D.G."/>
            <person name="Olmstead R.G."/>
            <person name="Boore J.L."/>
        </authorList>
    </citation>
    <scope>NUCLEOTIDE SEQUENCE [LARGE SCALE GENOMIC DNA]</scope>
</reference>